<gene>
    <name evidence="1" type="primary">argC</name>
    <name type="ordered locus">Sbal223_4014</name>
</gene>
<protein>
    <recommendedName>
        <fullName evidence="1">N-acetyl-gamma-glutamyl-phosphate reductase</fullName>
        <shortName evidence="1">AGPR</shortName>
        <ecNumber evidence="1">1.2.1.38</ecNumber>
    </recommendedName>
    <alternativeName>
        <fullName evidence="1">N-acetyl-glutamate semialdehyde dehydrogenase</fullName>
        <shortName evidence="1">NAGSA dehydrogenase</shortName>
    </alternativeName>
</protein>
<feature type="chain" id="PRO_1000123251" description="N-acetyl-gamma-glutamyl-phosphate reductase">
    <location>
        <begin position="1"/>
        <end position="326"/>
    </location>
</feature>
<feature type="active site" evidence="1">
    <location>
        <position position="155"/>
    </location>
</feature>
<evidence type="ECO:0000255" key="1">
    <source>
        <dbReference type="HAMAP-Rule" id="MF_00150"/>
    </source>
</evidence>
<proteinExistence type="inferred from homology"/>
<accession>B8EBG3</accession>
<dbReference type="EC" id="1.2.1.38" evidence="1"/>
<dbReference type="EMBL" id="CP001252">
    <property type="protein sequence ID" value="ACK48487.1"/>
    <property type="molecule type" value="Genomic_DNA"/>
</dbReference>
<dbReference type="RefSeq" id="WP_012588802.1">
    <property type="nucleotide sequence ID" value="NC_011663.1"/>
</dbReference>
<dbReference type="SMR" id="B8EBG3"/>
<dbReference type="KEGG" id="sbp:Sbal223_4014"/>
<dbReference type="HOGENOM" id="CLU_006384_0_1_6"/>
<dbReference type="UniPathway" id="UPA00068">
    <property type="reaction ID" value="UER00108"/>
</dbReference>
<dbReference type="Proteomes" id="UP000002507">
    <property type="component" value="Chromosome"/>
</dbReference>
<dbReference type="GO" id="GO:0005737">
    <property type="term" value="C:cytoplasm"/>
    <property type="evidence" value="ECO:0007669"/>
    <property type="project" value="UniProtKB-SubCell"/>
</dbReference>
<dbReference type="GO" id="GO:0003942">
    <property type="term" value="F:N-acetyl-gamma-glutamyl-phosphate reductase activity"/>
    <property type="evidence" value="ECO:0007669"/>
    <property type="project" value="UniProtKB-UniRule"/>
</dbReference>
<dbReference type="GO" id="GO:0051287">
    <property type="term" value="F:NAD binding"/>
    <property type="evidence" value="ECO:0007669"/>
    <property type="project" value="InterPro"/>
</dbReference>
<dbReference type="GO" id="GO:0070401">
    <property type="term" value="F:NADP+ binding"/>
    <property type="evidence" value="ECO:0007669"/>
    <property type="project" value="InterPro"/>
</dbReference>
<dbReference type="GO" id="GO:0006526">
    <property type="term" value="P:L-arginine biosynthetic process"/>
    <property type="evidence" value="ECO:0007669"/>
    <property type="project" value="UniProtKB-UniRule"/>
</dbReference>
<dbReference type="CDD" id="cd23934">
    <property type="entry name" value="AGPR_1_C"/>
    <property type="match status" value="1"/>
</dbReference>
<dbReference type="CDD" id="cd17895">
    <property type="entry name" value="AGPR_1_N"/>
    <property type="match status" value="1"/>
</dbReference>
<dbReference type="FunFam" id="3.30.360.10:FF:000014">
    <property type="entry name" value="N-acetyl-gamma-glutamyl-phosphate reductase"/>
    <property type="match status" value="1"/>
</dbReference>
<dbReference type="Gene3D" id="3.30.360.10">
    <property type="entry name" value="Dihydrodipicolinate Reductase, domain 2"/>
    <property type="match status" value="1"/>
</dbReference>
<dbReference type="Gene3D" id="3.40.50.720">
    <property type="entry name" value="NAD(P)-binding Rossmann-like Domain"/>
    <property type="match status" value="1"/>
</dbReference>
<dbReference type="HAMAP" id="MF_00150">
    <property type="entry name" value="ArgC_type1"/>
    <property type="match status" value="1"/>
</dbReference>
<dbReference type="InterPro" id="IPR023013">
    <property type="entry name" value="AGPR_AS"/>
</dbReference>
<dbReference type="InterPro" id="IPR000706">
    <property type="entry name" value="AGPR_type-1"/>
</dbReference>
<dbReference type="InterPro" id="IPR036291">
    <property type="entry name" value="NAD(P)-bd_dom_sf"/>
</dbReference>
<dbReference type="InterPro" id="IPR050085">
    <property type="entry name" value="NAGSA_dehydrogenase"/>
</dbReference>
<dbReference type="InterPro" id="IPR000534">
    <property type="entry name" value="Semialdehyde_DH_NAD-bd"/>
</dbReference>
<dbReference type="NCBIfam" id="TIGR01850">
    <property type="entry name" value="argC"/>
    <property type="match status" value="1"/>
</dbReference>
<dbReference type="PANTHER" id="PTHR32338:SF10">
    <property type="entry name" value="N-ACETYL-GAMMA-GLUTAMYL-PHOSPHATE REDUCTASE, CHLOROPLASTIC-RELATED"/>
    <property type="match status" value="1"/>
</dbReference>
<dbReference type="PANTHER" id="PTHR32338">
    <property type="entry name" value="N-ACETYL-GAMMA-GLUTAMYL-PHOSPHATE REDUCTASE, CHLOROPLASTIC-RELATED-RELATED"/>
    <property type="match status" value="1"/>
</dbReference>
<dbReference type="Pfam" id="PF01118">
    <property type="entry name" value="Semialdhyde_dh"/>
    <property type="match status" value="1"/>
</dbReference>
<dbReference type="Pfam" id="PF22698">
    <property type="entry name" value="Semialdhyde_dhC_1"/>
    <property type="match status" value="1"/>
</dbReference>
<dbReference type="SMART" id="SM00859">
    <property type="entry name" value="Semialdhyde_dh"/>
    <property type="match status" value="1"/>
</dbReference>
<dbReference type="SUPFAM" id="SSF55347">
    <property type="entry name" value="Glyceraldehyde-3-phosphate dehydrogenase-like, C-terminal domain"/>
    <property type="match status" value="1"/>
</dbReference>
<dbReference type="SUPFAM" id="SSF51735">
    <property type="entry name" value="NAD(P)-binding Rossmann-fold domains"/>
    <property type="match status" value="1"/>
</dbReference>
<dbReference type="PROSITE" id="PS01224">
    <property type="entry name" value="ARGC"/>
    <property type="match status" value="1"/>
</dbReference>
<organism>
    <name type="scientific">Shewanella baltica (strain OS223)</name>
    <dbReference type="NCBI Taxonomy" id="407976"/>
    <lineage>
        <taxon>Bacteria</taxon>
        <taxon>Pseudomonadati</taxon>
        <taxon>Pseudomonadota</taxon>
        <taxon>Gammaproteobacteria</taxon>
        <taxon>Alteromonadales</taxon>
        <taxon>Shewanellaceae</taxon>
        <taxon>Shewanella</taxon>
    </lineage>
</organism>
<sequence>MKNIAIIGASGYTGAQLTALIHAEADLTIQGLYVSENSLDKGKPLADLYPSYSHIALTLSPLSDDAKAKIVAEADAVVLATEHSVSLHLAAWFYSQGLAVFDLSGAYRFSDVAQYPKWYGFEHEYPEVLAKAVYGLAEWNAKEIAATKMIAVPGCYPTASLTALKPLASLLTSAYPVINAVSGVTGAGRKAQLHTSFCEVSLTPYGVLGHRHQPEIVTQLGQEVIFTPHLGNFKRGILATITVQLKPGTTTADVAAAYSVYDQAPLVTVKHNQFPKVDDVVLTPNCHLGWKFDENSGYLVVASAIDNLMKGAASQALQCIKIHFNL</sequence>
<name>ARGC_SHEB2</name>
<keyword id="KW-0028">Amino-acid biosynthesis</keyword>
<keyword id="KW-0055">Arginine biosynthesis</keyword>
<keyword id="KW-0963">Cytoplasm</keyword>
<keyword id="KW-0521">NADP</keyword>
<keyword id="KW-0560">Oxidoreductase</keyword>
<reference key="1">
    <citation type="submission" date="2008-12" db="EMBL/GenBank/DDBJ databases">
        <title>Complete sequence of chromosome of Shewanella baltica OS223.</title>
        <authorList>
            <consortium name="US DOE Joint Genome Institute"/>
            <person name="Lucas S."/>
            <person name="Copeland A."/>
            <person name="Lapidus A."/>
            <person name="Glavina del Rio T."/>
            <person name="Dalin E."/>
            <person name="Tice H."/>
            <person name="Bruce D."/>
            <person name="Goodwin L."/>
            <person name="Pitluck S."/>
            <person name="Chertkov O."/>
            <person name="Meincke L."/>
            <person name="Brettin T."/>
            <person name="Detter J.C."/>
            <person name="Han C."/>
            <person name="Kuske C.R."/>
            <person name="Larimer F."/>
            <person name="Land M."/>
            <person name="Hauser L."/>
            <person name="Kyrpides N."/>
            <person name="Ovchinnikova G."/>
            <person name="Brettar I."/>
            <person name="Rodrigues J."/>
            <person name="Konstantinidis K."/>
            <person name="Tiedje J."/>
        </authorList>
    </citation>
    <scope>NUCLEOTIDE SEQUENCE [LARGE SCALE GENOMIC DNA]</scope>
    <source>
        <strain>OS223</strain>
    </source>
</reference>
<comment type="function">
    <text evidence="1">Catalyzes the NADPH-dependent reduction of N-acetyl-5-glutamyl phosphate to yield N-acetyl-L-glutamate 5-semialdehyde.</text>
</comment>
<comment type="catalytic activity">
    <reaction evidence="1">
        <text>N-acetyl-L-glutamate 5-semialdehyde + phosphate + NADP(+) = N-acetyl-L-glutamyl 5-phosphate + NADPH + H(+)</text>
        <dbReference type="Rhea" id="RHEA:21588"/>
        <dbReference type="ChEBI" id="CHEBI:15378"/>
        <dbReference type="ChEBI" id="CHEBI:29123"/>
        <dbReference type="ChEBI" id="CHEBI:43474"/>
        <dbReference type="ChEBI" id="CHEBI:57783"/>
        <dbReference type="ChEBI" id="CHEBI:57936"/>
        <dbReference type="ChEBI" id="CHEBI:58349"/>
        <dbReference type="EC" id="1.2.1.38"/>
    </reaction>
</comment>
<comment type="pathway">
    <text evidence="1">Amino-acid biosynthesis; L-arginine biosynthesis; N(2)-acetyl-L-ornithine from L-glutamate: step 3/4.</text>
</comment>
<comment type="subcellular location">
    <subcellularLocation>
        <location evidence="1">Cytoplasm</location>
    </subcellularLocation>
</comment>
<comment type="similarity">
    <text evidence="1">Belongs to the NAGSA dehydrogenase family. Type 1 subfamily.</text>
</comment>